<dbReference type="EC" id="7.4.2.11" evidence="1"/>
<dbReference type="EMBL" id="CP000259">
    <property type="protein sequence ID" value="ABF31459.1"/>
    <property type="molecule type" value="Genomic_DNA"/>
</dbReference>
<dbReference type="RefSeq" id="WP_002991074.1">
    <property type="nucleotide sequence ID" value="NC_008021.1"/>
</dbReference>
<dbReference type="SMR" id="Q1JNE0"/>
<dbReference type="KEGG" id="spk:MGAS9429_Spy0271"/>
<dbReference type="HOGENOM" id="CLU_000604_1_3_9"/>
<dbReference type="Proteomes" id="UP000002433">
    <property type="component" value="Chromosome"/>
</dbReference>
<dbReference type="GO" id="GO:0005886">
    <property type="term" value="C:plasma membrane"/>
    <property type="evidence" value="ECO:0007669"/>
    <property type="project" value="UniProtKB-SubCell"/>
</dbReference>
<dbReference type="GO" id="GO:0033232">
    <property type="term" value="F:ABC-type D-methionine transporter activity"/>
    <property type="evidence" value="ECO:0007669"/>
    <property type="project" value="UniProtKB-EC"/>
</dbReference>
<dbReference type="GO" id="GO:0005524">
    <property type="term" value="F:ATP binding"/>
    <property type="evidence" value="ECO:0007669"/>
    <property type="project" value="UniProtKB-KW"/>
</dbReference>
<dbReference type="GO" id="GO:0016887">
    <property type="term" value="F:ATP hydrolysis activity"/>
    <property type="evidence" value="ECO:0007669"/>
    <property type="project" value="InterPro"/>
</dbReference>
<dbReference type="CDD" id="cd03258">
    <property type="entry name" value="ABC_MetN_methionine_transporter"/>
    <property type="match status" value="1"/>
</dbReference>
<dbReference type="Gene3D" id="3.30.70.260">
    <property type="match status" value="1"/>
</dbReference>
<dbReference type="Gene3D" id="3.40.50.300">
    <property type="entry name" value="P-loop containing nucleotide triphosphate hydrolases"/>
    <property type="match status" value="1"/>
</dbReference>
<dbReference type="InterPro" id="IPR003593">
    <property type="entry name" value="AAA+_ATPase"/>
</dbReference>
<dbReference type="InterPro" id="IPR003439">
    <property type="entry name" value="ABC_transporter-like_ATP-bd"/>
</dbReference>
<dbReference type="InterPro" id="IPR017871">
    <property type="entry name" value="ABC_transporter-like_CS"/>
</dbReference>
<dbReference type="InterPro" id="IPR045865">
    <property type="entry name" value="ACT-like_dom_sf"/>
</dbReference>
<dbReference type="InterPro" id="IPR041701">
    <property type="entry name" value="MetN_ABC"/>
</dbReference>
<dbReference type="InterPro" id="IPR050086">
    <property type="entry name" value="MetN_ABC_transporter-like"/>
</dbReference>
<dbReference type="InterPro" id="IPR018449">
    <property type="entry name" value="NIL_domain"/>
</dbReference>
<dbReference type="InterPro" id="IPR027417">
    <property type="entry name" value="P-loop_NTPase"/>
</dbReference>
<dbReference type="PANTHER" id="PTHR43166">
    <property type="entry name" value="AMINO ACID IMPORT ATP-BINDING PROTEIN"/>
    <property type="match status" value="1"/>
</dbReference>
<dbReference type="PANTHER" id="PTHR43166:SF30">
    <property type="entry name" value="METHIONINE IMPORT ATP-BINDING PROTEIN METN"/>
    <property type="match status" value="1"/>
</dbReference>
<dbReference type="Pfam" id="PF00005">
    <property type="entry name" value="ABC_tran"/>
    <property type="match status" value="1"/>
</dbReference>
<dbReference type="Pfam" id="PF09383">
    <property type="entry name" value="NIL"/>
    <property type="match status" value="1"/>
</dbReference>
<dbReference type="SMART" id="SM00382">
    <property type="entry name" value="AAA"/>
    <property type="match status" value="1"/>
</dbReference>
<dbReference type="SMART" id="SM00930">
    <property type="entry name" value="NIL"/>
    <property type="match status" value="1"/>
</dbReference>
<dbReference type="SUPFAM" id="SSF55021">
    <property type="entry name" value="ACT-like"/>
    <property type="match status" value="1"/>
</dbReference>
<dbReference type="SUPFAM" id="SSF52540">
    <property type="entry name" value="P-loop containing nucleoside triphosphate hydrolases"/>
    <property type="match status" value="1"/>
</dbReference>
<dbReference type="PROSITE" id="PS00211">
    <property type="entry name" value="ABC_TRANSPORTER_1"/>
    <property type="match status" value="1"/>
</dbReference>
<dbReference type="PROSITE" id="PS50893">
    <property type="entry name" value="ABC_TRANSPORTER_2"/>
    <property type="match status" value="1"/>
</dbReference>
<dbReference type="PROSITE" id="PS51264">
    <property type="entry name" value="METN"/>
    <property type="match status" value="1"/>
</dbReference>
<keyword id="KW-0029">Amino-acid transport</keyword>
<keyword id="KW-0067">ATP-binding</keyword>
<keyword id="KW-1003">Cell membrane</keyword>
<keyword id="KW-0472">Membrane</keyword>
<keyword id="KW-0547">Nucleotide-binding</keyword>
<keyword id="KW-1278">Translocase</keyword>
<keyword id="KW-0813">Transport</keyword>
<proteinExistence type="inferred from homology"/>
<comment type="function">
    <text evidence="1">Part of the ABC transporter complex MetNIQ involved in methionine import. Responsible for energy coupling to the transport system.</text>
</comment>
<comment type="catalytic activity">
    <reaction evidence="1">
        <text>L-methionine(out) + ATP + H2O = L-methionine(in) + ADP + phosphate + H(+)</text>
        <dbReference type="Rhea" id="RHEA:29779"/>
        <dbReference type="ChEBI" id="CHEBI:15377"/>
        <dbReference type="ChEBI" id="CHEBI:15378"/>
        <dbReference type="ChEBI" id="CHEBI:30616"/>
        <dbReference type="ChEBI" id="CHEBI:43474"/>
        <dbReference type="ChEBI" id="CHEBI:57844"/>
        <dbReference type="ChEBI" id="CHEBI:456216"/>
        <dbReference type="EC" id="7.4.2.11"/>
    </reaction>
</comment>
<comment type="catalytic activity">
    <reaction evidence="1">
        <text>D-methionine(out) + ATP + H2O = D-methionine(in) + ADP + phosphate + H(+)</text>
        <dbReference type="Rhea" id="RHEA:29767"/>
        <dbReference type="ChEBI" id="CHEBI:15377"/>
        <dbReference type="ChEBI" id="CHEBI:15378"/>
        <dbReference type="ChEBI" id="CHEBI:30616"/>
        <dbReference type="ChEBI" id="CHEBI:43474"/>
        <dbReference type="ChEBI" id="CHEBI:57932"/>
        <dbReference type="ChEBI" id="CHEBI:456216"/>
        <dbReference type="EC" id="7.4.2.11"/>
    </reaction>
</comment>
<comment type="subunit">
    <text evidence="1">The complex is composed of two ATP-binding proteins (MetN), two transmembrane proteins (MetI) and a solute-binding protein (MetQ).</text>
</comment>
<comment type="subcellular location">
    <subcellularLocation>
        <location evidence="1">Cell membrane</location>
        <topology evidence="1">Peripheral membrane protein</topology>
    </subcellularLocation>
</comment>
<comment type="similarity">
    <text evidence="1">Belongs to the ABC transporter superfamily. Methionine importer (TC 3.A.1.24) family.</text>
</comment>
<protein>
    <recommendedName>
        <fullName evidence="1">Methionine import ATP-binding protein MetN</fullName>
        <ecNumber evidence="1">7.4.2.11</ecNumber>
    </recommendedName>
</protein>
<sequence>MNEAIIQLDHIDITFRQKKRVIEAVKDVTVHINQGDIYGIVGYSGAGKSTLVRVINLLQAPTNGKITVDGDVTFDQGKVQLSANALRQKRRDIGMIFQHFNLMAQKTAKENVAFALRHSSLSKTEKEHKVIELLELVGLSERADNYPAQLSGGQKQRVAIARALANDPKILISDEATSALDPKTTKQILALLQELNRKLGLTIVMITHEMQIVKDICNRVAVMQNGVLIEEGSVLDIFSNPKEALTQEFITTATGIDEALEKINQQDIVKHLPANALLAQLKYAGTSTDEPLLNSIYRQFEVTANILYGNIEILDHIPVGDMIVVLEGQAENILAAEKALHEAGVDVSILKRGA</sequence>
<reference key="1">
    <citation type="journal article" date="2006" name="Proc. Natl. Acad. Sci. U.S.A.">
        <title>Molecular genetic anatomy of inter- and intraserotype variation in the human bacterial pathogen group A Streptococcus.</title>
        <authorList>
            <person name="Beres S.B."/>
            <person name="Richter E.W."/>
            <person name="Nagiec M.J."/>
            <person name="Sumby P."/>
            <person name="Porcella S.F."/>
            <person name="DeLeo F.R."/>
            <person name="Musser J.M."/>
        </authorList>
    </citation>
    <scope>NUCLEOTIDE SEQUENCE [LARGE SCALE GENOMIC DNA]</scope>
    <source>
        <strain>MGAS9429</strain>
    </source>
</reference>
<name>METN_STRPC</name>
<accession>Q1JNE0</accession>
<gene>
    <name evidence="1" type="primary">metN</name>
    <name type="ordered locus">MGAS9429_Spy0271</name>
</gene>
<evidence type="ECO:0000255" key="1">
    <source>
        <dbReference type="HAMAP-Rule" id="MF_01719"/>
    </source>
</evidence>
<feature type="chain" id="PRO_0000270419" description="Methionine import ATP-binding protein MetN">
    <location>
        <begin position="1"/>
        <end position="354"/>
    </location>
</feature>
<feature type="domain" description="ABC transporter" evidence="1">
    <location>
        <begin position="8"/>
        <end position="250"/>
    </location>
</feature>
<feature type="binding site" evidence="1">
    <location>
        <begin position="42"/>
        <end position="49"/>
    </location>
    <ligand>
        <name>ATP</name>
        <dbReference type="ChEBI" id="CHEBI:30616"/>
    </ligand>
</feature>
<organism>
    <name type="scientific">Streptococcus pyogenes serotype M12 (strain MGAS9429)</name>
    <dbReference type="NCBI Taxonomy" id="370551"/>
    <lineage>
        <taxon>Bacteria</taxon>
        <taxon>Bacillati</taxon>
        <taxon>Bacillota</taxon>
        <taxon>Bacilli</taxon>
        <taxon>Lactobacillales</taxon>
        <taxon>Streptococcaceae</taxon>
        <taxon>Streptococcus</taxon>
    </lineage>
</organism>